<keyword id="KW-0027">Amidation</keyword>
<keyword id="KW-0165">Cleavage on pair of basic residues</keyword>
<keyword id="KW-1015">Disulfide bond</keyword>
<keyword id="KW-1213">G-protein coupled receptor impairing toxin</keyword>
<keyword id="KW-0964">Secreted</keyword>
<keyword id="KW-0732">Signal</keyword>
<keyword id="KW-0800">Toxin</keyword>
<dbReference type="EMBL" id="DQ141138">
    <property type="protein sequence ID" value="AAZ85403.1"/>
    <property type="molecule type" value="mRNA"/>
</dbReference>
<dbReference type="ConoServer" id="1675">
    <property type="toxin name" value="LiC32 precursor"/>
</dbReference>
<dbReference type="GO" id="GO:0005576">
    <property type="term" value="C:extracellular region"/>
    <property type="evidence" value="ECO:0007669"/>
    <property type="project" value="UniProtKB-SubCell"/>
</dbReference>
<dbReference type="GO" id="GO:0090729">
    <property type="term" value="F:toxin activity"/>
    <property type="evidence" value="ECO:0007669"/>
    <property type="project" value="UniProtKB-KW"/>
</dbReference>
<dbReference type="InterPro" id="IPR031565">
    <property type="entry name" value="T-conotoxin"/>
</dbReference>
<dbReference type="Pfam" id="PF16981">
    <property type="entry name" value="Chi-conotoxin"/>
    <property type="match status" value="1"/>
</dbReference>
<evidence type="ECO:0000250" key="1"/>
<evidence type="ECO:0000255" key="2"/>
<evidence type="ECO:0000269" key="3">
    <source>
    </source>
</evidence>
<evidence type="ECO:0000269" key="4">
    <source>
    </source>
</evidence>
<evidence type="ECO:0000303" key="5">
    <source>
    </source>
</evidence>
<evidence type="ECO:0000305" key="6"/>
<name>CT32_CONLI</name>
<sequence>MRCVPVFIILLLLSPSAPSVDAHPKTKDDVPLASFHDDAKRTLQRLWQNTWCCRDHLRCCG</sequence>
<feature type="signal peptide" evidence="2">
    <location>
        <begin position="1"/>
        <end position="22"/>
    </location>
</feature>
<feature type="propeptide" id="PRO_0000274057" evidence="1">
    <location>
        <begin position="23"/>
        <end position="44"/>
    </location>
</feature>
<feature type="peptide" id="PRO_0000274058" description="Conotoxin LiC32">
    <location>
        <begin position="46"/>
        <end position="60"/>
    </location>
</feature>
<feature type="modified residue" description="Cysteine amide" evidence="3">
    <location>
        <position position="60"/>
    </location>
</feature>
<accession>Q3YEH5</accession>
<organism>
    <name type="scientific">Conus lividus</name>
    <name type="common">Livid cone</name>
    <dbReference type="NCBI Taxonomy" id="89426"/>
    <lineage>
        <taxon>Eukaryota</taxon>
        <taxon>Metazoa</taxon>
        <taxon>Spiralia</taxon>
        <taxon>Lophotrochozoa</taxon>
        <taxon>Mollusca</taxon>
        <taxon>Gastropoda</taxon>
        <taxon>Caenogastropoda</taxon>
        <taxon>Neogastropoda</taxon>
        <taxon>Conoidea</taxon>
        <taxon>Conidae</taxon>
        <taxon>Conus</taxon>
        <taxon>Lividoconus</taxon>
    </lineage>
</organism>
<proteinExistence type="evidence at protein level"/>
<comment type="function">
    <text evidence="4">Has the ability to interact with the G-protein coupled somatostatin type 3 receptor (SSTR3). The ability was measured in competition binding experiments and the constant of inhibition (Ki) has been evaluated to be 3.5 uM.</text>
</comment>
<comment type="subcellular location">
    <subcellularLocation>
        <location evidence="1">Secreted</location>
    </subcellularLocation>
</comment>
<comment type="tissue specificity">
    <text>Expressed by the venom duct.</text>
</comment>
<comment type="domain">
    <text>The cysteine framework is V (CC-CC).</text>
</comment>
<comment type="PTM">
    <text evidence="6">Contains 2 disulfide bonds that can be either 'C1-C3, C2-C4' or 'C1-C4, C2-C3', since these disulfide connectivities have been observed for conotoxins with cysteine framework V (for examples, see AC P0DQQ7 and AC P81755).</text>
</comment>
<comment type="similarity">
    <text evidence="6">Belongs to the conotoxin T superfamily.</text>
</comment>
<reference key="1">
    <citation type="journal article" date="2006" name="Chem. Biol. Drug Des.">
        <title>Identification and molecular diversity of T-superfamily conotoxins from Conus lividus and Conus litteratus.</title>
        <authorList>
            <person name="Luo S."/>
            <person name="Zhangsun D."/>
            <person name="Wu Y."/>
            <person name="Zhu X."/>
            <person name="Xie L."/>
            <person name="Hu Y."/>
            <person name="Zhang J."/>
            <person name="Zhao X."/>
        </authorList>
    </citation>
    <scope>NUCLEOTIDE SEQUENCE [MRNA]</scope>
    <scope>AMIDATION AT CYS-60</scope>
    <source>
        <tissue>Venom duct</tissue>
    </source>
</reference>
<reference key="2">
    <citation type="journal article" date="2013" name="Biochem. Pharmacol.">
        <title>Identification, structural and pharmacological characterization of tau-CnVA, a conopeptide that selectively interacts with somatostatin sst receptor.</title>
        <authorList>
            <person name="Petrel C."/>
            <person name="Hocking H.G."/>
            <person name="Reynaud M."/>
            <person name="Upert G."/>
            <person name="Favreau P."/>
            <person name="Biass D."/>
            <person name="Paolini-Bertrand M."/>
            <person name="Peigneur S."/>
            <person name="Tytgat J."/>
            <person name="Gilles N."/>
            <person name="Hartley O."/>
            <person name="Boelens R."/>
            <person name="Stocklin R."/>
            <person name="Servent D."/>
        </authorList>
    </citation>
    <scope>FUNCTION</scope>
    <scope>SYNTHESIS OF 46-60</scope>
</reference>
<protein>
    <recommendedName>
        <fullName evidence="5">Conotoxin LiC32</fullName>
    </recommendedName>
</protein>